<comment type="function">
    <text evidence="2 7">Calcium-regulated non-lysosomal thiol-protease which catalyzes limited proteolysis of substrates involved in cytoskeletal remodeling and signal transduction. Proteolytically cleaves MYOC at 'Arg-226' (By similarity). Proteolytically cleaves CPEB3 following neuronal stimulation which abolishes CPEB3 translational repressor activity, leading to translation of CPEB3 target mRNAs (PubMed:22711986).</text>
</comment>
<comment type="catalytic activity">
    <reaction>
        <text>Broad endopeptidase specificity.</text>
        <dbReference type="EC" id="3.4.22.53"/>
    </reaction>
</comment>
<comment type="cofactor">
    <cofactor evidence="1">
        <name>Ca(2+)</name>
        <dbReference type="ChEBI" id="CHEBI:29108"/>
    </cofactor>
    <text evidence="1">Binds 7 Ca(2+) ions.</text>
</comment>
<comment type="activity regulation">
    <text>Activated by 200-1000 micromolar concentrations of calcium and inhibited by calpastatin.</text>
</comment>
<comment type="subunit">
    <text evidence="3 7">Forms a heterodimer with a small (regulatory) subunit (CAPNS1) (By similarity). Interacts with CPEB3; this leads to cleavage of CPEB3 (PubMed:22711986).</text>
</comment>
<comment type="subcellular location">
    <subcellularLocation>
        <location evidence="1">Cytoplasm</location>
    </subcellularLocation>
    <subcellularLocation>
        <location evidence="1">Cell membrane</location>
    </subcellularLocation>
    <text evidence="1">Translocates to the plasma membrane upon Ca(2+) binding.</text>
</comment>
<comment type="tissue specificity">
    <text>Ubiquitous.</text>
</comment>
<comment type="similarity">
    <text evidence="8">Belongs to the peptidase C2 family.</text>
</comment>
<protein>
    <recommendedName>
        <fullName>Calpain-2 catalytic subunit</fullName>
        <ecNumber>3.4.22.53</ecNumber>
    </recommendedName>
    <alternativeName>
        <fullName>80 kDa M-calpain subunit</fullName>
        <shortName>CALP80</shortName>
    </alternativeName>
    <alternativeName>
        <fullName>Calcium-activated neutral proteinase 2</fullName>
        <shortName>CANP 2</shortName>
    </alternativeName>
    <alternativeName>
        <fullName>Calpain M-type</fullName>
    </alternativeName>
    <alternativeName>
        <fullName>Calpain-2 large subunit</fullName>
    </alternativeName>
    <alternativeName>
        <fullName>Millimolar-calpain</fullName>
        <shortName>M-calpain</shortName>
    </alternativeName>
</protein>
<accession>O08529</accession>
<accession>O35518</accession>
<accession>O54843</accession>
<reference key="1">
    <citation type="journal article" date="1997" name="Genomics">
        <title>A new subfamily of vertebrate calpains lacking a calmodulin-like domain: implications for calpain regulation and evolution.</title>
        <authorList>
            <person name="Dear T.N."/>
            <person name="Matena K."/>
            <person name="Vingron M."/>
            <person name="Boehm T."/>
        </authorList>
    </citation>
    <scope>NUCLEOTIDE SEQUENCE [MRNA]</scope>
    <source>
        <strain>BALB/cJ</strain>
    </source>
</reference>
<reference key="2">
    <citation type="submission" date="1997-10" db="EMBL/GenBank/DDBJ databases">
        <authorList>
            <person name="Ozaki Y."/>
        </authorList>
    </citation>
    <scope>NUCLEOTIDE SEQUENCE [MRNA]</scope>
    <source>
        <strain>BALB/cJ</strain>
    </source>
</reference>
<reference key="3">
    <citation type="journal article" date="1998" name="J. Neurosci. Res.">
        <title>Cloning of m-calpain 80 kD subunit from the axonal degeneration-resistant WLD(S) mouse mutant.</title>
        <authorList>
            <person name="Glass J.D."/>
            <person name="Nash N.R."/>
            <person name="Dry I."/>
            <person name="Culver D."/>
            <person name="Levey A.I."/>
            <person name="Wesselingh S."/>
        </authorList>
    </citation>
    <scope>NUCLEOTIDE SEQUENCE [MRNA]</scope>
    <source>
        <tissue>CNS</tissue>
    </source>
</reference>
<reference key="4">
    <citation type="journal article" date="2004" name="Genome Res.">
        <title>The status, quality, and expansion of the NIH full-length cDNA project: the Mammalian Gene Collection (MGC).</title>
        <authorList>
            <consortium name="The MGC Project Team"/>
        </authorList>
    </citation>
    <scope>NUCLEOTIDE SEQUENCE [LARGE SCALE MRNA]</scope>
    <source>
        <strain>C57BL/6J</strain>
        <tissue>Brain</tissue>
    </source>
</reference>
<reference key="5">
    <citation type="journal article" date="2010" name="Cell">
        <title>A tissue-specific atlas of mouse protein phosphorylation and expression.</title>
        <authorList>
            <person name="Huttlin E.L."/>
            <person name="Jedrychowski M.P."/>
            <person name="Elias J.E."/>
            <person name="Goswami T."/>
            <person name="Rad R."/>
            <person name="Beausoleil S.A."/>
            <person name="Villen J."/>
            <person name="Haas W."/>
            <person name="Sowa M.E."/>
            <person name="Gygi S.P."/>
        </authorList>
    </citation>
    <scope>IDENTIFICATION BY MASS SPECTROMETRY [LARGE SCALE ANALYSIS]</scope>
    <source>
        <tissue>Brain</tissue>
        <tissue>Brown adipose tissue</tissue>
        <tissue>Heart</tissue>
        <tissue>Kidney</tissue>
        <tissue>Liver</tissue>
        <tissue>Lung</tissue>
        <tissue>Pancreas</tissue>
        <tissue>Spleen</tissue>
        <tissue>Testis</tissue>
    </source>
</reference>
<reference key="6">
    <citation type="journal article" date="2012" name="Mol. Cell. Biol.">
        <title>Calpain 2 activated through N-methyl-D-aspartic acid receptor signaling cleaves CPEB3 and abrogates CPEB3-repressed translation in neurons.</title>
        <authorList>
            <person name="Wang C.F."/>
            <person name="Huang Y.S."/>
        </authorList>
    </citation>
    <scope>FUNCTION</scope>
    <scope>INTERACTION WITH CPEB3</scope>
</reference>
<sequence length="700" mass="79872">MAGIAIKLAKDREAAEGLGSHERAIKYLNQDYETLRNECLEAGALFQDPSFPALPSSLGYKELGPYSSKTRGIEWKRPTEICADPQFIIGGATRTDICQGALGDCWLLAAIASLTLNEEILARVVPPDQSFQENYAGIFHFQFWQYGEWVEVVVDDRLPTKDGELLFVHSAEGSEFWSALLEKAYAKINGCYEALSGGATTEGFEDFTGGIAEWYELRKPPPNLFKIIQKALEKGSLLGCSIDITSAADSEAVTYQKLVKGHAYSVTGAEEVESSGSLQKLIRIRNPWGQVEWTGKWNDNCPSWNTVDPEVRANLTERQEDGEFWMSFSDFLRHYSRLEICNLTPDTLTCDSYKKWKLTKMDGNWRRGSTAGGCRNYPNTFWMNPQYLIKLEEEDEDEEDGERGCTFLVGLIQKHRRRQRKMGEDMHTIGFGIYEVPEELTGQTNIHLGKNFFLTTRARERSDTFINLREVLNRFKLPPGEYVLVPSTFEPHKDGDFCIRVFSEKKADYQAVDDEIEANIEEIDANEEDIDDGFRRLFVQLAGEDAEISAFELQTILRRVLAKRQDIKSDGFSIETCKIMVDMLDEDGSGKLGLKEFYILWTKIQKYQKIYREIDVDRSGTMNSYEMRKALEEAGFKLPCQLHQVIVARFADDELIIDFDNFVRCLVRLETLFKIFKQLDPENTGTIQLNLASWLSFSVL</sequence>
<evidence type="ECO:0000250" key="1"/>
<evidence type="ECO:0000250" key="2">
    <source>
        <dbReference type="UniProtKB" id="P17655"/>
    </source>
</evidence>
<evidence type="ECO:0000250" key="3">
    <source>
        <dbReference type="UniProtKB" id="Q07009"/>
    </source>
</evidence>
<evidence type="ECO:0000255" key="4"/>
<evidence type="ECO:0000255" key="5">
    <source>
        <dbReference type="PROSITE-ProRule" id="PRU00239"/>
    </source>
</evidence>
<evidence type="ECO:0000255" key="6">
    <source>
        <dbReference type="PROSITE-ProRule" id="PRU00448"/>
    </source>
</evidence>
<evidence type="ECO:0000269" key="7">
    <source>
    </source>
</evidence>
<evidence type="ECO:0000305" key="8"/>
<gene>
    <name type="primary">Capn2</name>
</gene>
<proteinExistence type="evidence at protein level"/>
<feature type="initiator methionine" description="Removed" evidence="2">
    <location>
        <position position="1"/>
    </location>
</feature>
<feature type="propeptide" id="PRO_0000026491" description="Anchors to the small subunit" evidence="4">
    <location>
        <begin position="2"/>
        <end position="19"/>
    </location>
</feature>
<feature type="chain" id="PRO_0000026492" description="Calpain-2 catalytic subunit">
    <location>
        <begin position="20"/>
        <end position="700"/>
    </location>
</feature>
<feature type="domain" description="Calpain catalytic" evidence="5">
    <location>
        <begin position="45"/>
        <end position="344"/>
    </location>
</feature>
<feature type="domain" description="EF-hand 1" evidence="6">
    <location>
        <begin position="572"/>
        <end position="605"/>
    </location>
</feature>
<feature type="domain" description="EF-hand 2" evidence="6">
    <location>
        <begin position="602"/>
        <end position="637"/>
    </location>
</feature>
<feature type="region of interest" description="Domain III">
    <location>
        <begin position="345"/>
        <end position="514"/>
    </location>
</feature>
<feature type="region of interest" description="Linker">
    <location>
        <begin position="515"/>
        <end position="529"/>
    </location>
</feature>
<feature type="region of interest" description="Domain IV">
    <location>
        <begin position="530"/>
        <end position="700"/>
    </location>
</feature>
<feature type="active site" evidence="1">
    <location>
        <position position="105"/>
    </location>
</feature>
<feature type="active site" evidence="1">
    <location>
        <position position="262"/>
    </location>
</feature>
<feature type="active site" evidence="1">
    <location>
        <position position="286"/>
    </location>
</feature>
<feature type="binding site" evidence="1">
    <location>
        <position position="89"/>
    </location>
    <ligand>
        <name>Ca(2+)</name>
        <dbReference type="ChEBI" id="CHEBI:29108"/>
        <label>3</label>
    </ligand>
</feature>
<feature type="binding site" evidence="1">
    <location>
        <position position="91"/>
    </location>
    <ligand>
        <name>Ca(2+)</name>
        <dbReference type="ChEBI" id="CHEBI:29108"/>
        <label>3</label>
    </ligand>
</feature>
<feature type="binding site" evidence="1">
    <location>
        <position position="96"/>
    </location>
    <ligand>
        <name>Ca(2+)</name>
        <dbReference type="ChEBI" id="CHEBI:29108"/>
        <label>3</label>
    </ligand>
</feature>
<feature type="binding site" evidence="1">
    <location>
        <position position="175"/>
    </location>
    <ligand>
        <name>Ca(2+)</name>
        <dbReference type="ChEBI" id="CHEBI:29108"/>
        <label>3</label>
    </ligand>
</feature>
<feature type="binding site" evidence="1">
    <location>
        <position position="229"/>
    </location>
    <ligand>
        <name>Ca(2+)</name>
        <dbReference type="ChEBI" id="CHEBI:29108"/>
        <label>2</label>
    </ligand>
</feature>
<feature type="binding site" evidence="1">
    <location>
        <position position="230"/>
    </location>
    <ligand>
        <name>Ca(2+)</name>
        <dbReference type="ChEBI" id="CHEBI:29108"/>
        <label>2</label>
    </ligand>
</feature>
<feature type="binding site" evidence="1">
    <location>
        <position position="292"/>
    </location>
    <ligand>
        <name>Ca(2+)</name>
        <dbReference type="ChEBI" id="CHEBI:29108"/>
        <label>4</label>
    </ligand>
</feature>
<feature type="binding site" evidence="1">
    <location>
        <position position="299"/>
    </location>
    <ligand>
        <name>Ca(2+)</name>
        <dbReference type="ChEBI" id="CHEBI:29108"/>
        <label>4</label>
    </ligand>
</feature>
<feature type="binding site" evidence="1">
    <location>
        <position position="319"/>
    </location>
    <ligand>
        <name>Ca(2+)</name>
        <dbReference type="ChEBI" id="CHEBI:29108"/>
        <label>4</label>
    </ligand>
</feature>
<feature type="binding site" evidence="1">
    <location>
        <position position="323"/>
    </location>
    <ligand>
        <name>Ca(2+)</name>
        <dbReference type="ChEBI" id="CHEBI:29108"/>
        <label>4</label>
    </ligand>
</feature>
<feature type="binding site" evidence="1">
    <location>
        <position position="542"/>
    </location>
    <ligand>
        <name>Ca(2+)</name>
        <dbReference type="ChEBI" id="CHEBI:29108"/>
        <label>5</label>
    </ligand>
</feature>
<feature type="binding site" evidence="1">
    <location>
        <position position="545"/>
    </location>
    <ligand>
        <name>Ca(2+)</name>
        <dbReference type="ChEBI" id="CHEBI:29108"/>
        <label>5</label>
    </ligand>
</feature>
<feature type="binding site" evidence="1">
    <location>
        <position position="547"/>
    </location>
    <ligand>
        <name>Ca(2+)</name>
        <dbReference type="ChEBI" id="CHEBI:29108"/>
        <label>5</label>
    </ligand>
</feature>
<feature type="binding site" evidence="1">
    <location>
        <position position="552"/>
    </location>
    <ligand>
        <name>Ca(2+)</name>
        <dbReference type="ChEBI" id="CHEBI:29108"/>
        <label>5</label>
    </ligand>
</feature>
<feature type="binding site" evidence="6">
    <location>
        <position position="585"/>
    </location>
    <ligand>
        <name>Ca(2+)</name>
        <dbReference type="ChEBI" id="CHEBI:29108"/>
        <label>6</label>
    </ligand>
</feature>
<feature type="binding site" evidence="6">
    <location>
        <position position="587"/>
    </location>
    <ligand>
        <name>Ca(2+)</name>
        <dbReference type="ChEBI" id="CHEBI:29108"/>
        <label>6</label>
    </ligand>
</feature>
<feature type="binding site" evidence="6">
    <location>
        <position position="589"/>
    </location>
    <ligand>
        <name>Ca(2+)</name>
        <dbReference type="ChEBI" id="CHEBI:29108"/>
        <label>6</label>
    </ligand>
</feature>
<feature type="binding site" evidence="6">
    <location>
        <position position="591"/>
    </location>
    <ligand>
        <name>Ca(2+)</name>
        <dbReference type="ChEBI" id="CHEBI:29108"/>
        <label>6</label>
    </ligand>
</feature>
<feature type="binding site" evidence="6">
    <location>
        <position position="596"/>
    </location>
    <ligand>
        <name>Ca(2+)</name>
        <dbReference type="ChEBI" id="CHEBI:29108"/>
        <label>6</label>
    </ligand>
</feature>
<feature type="binding site" evidence="6">
    <location>
        <position position="615"/>
    </location>
    <ligand>
        <name>Ca(2+)</name>
        <dbReference type="ChEBI" id="CHEBI:29108"/>
        <label>7</label>
    </ligand>
</feature>
<feature type="binding site" evidence="6">
    <location>
        <position position="617"/>
    </location>
    <ligand>
        <name>Ca(2+)</name>
        <dbReference type="ChEBI" id="CHEBI:29108"/>
        <label>7</label>
    </ligand>
</feature>
<feature type="binding site" evidence="6">
    <location>
        <position position="619"/>
    </location>
    <ligand>
        <name>Ca(2+)</name>
        <dbReference type="ChEBI" id="CHEBI:29108"/>
        <label>7</label>
    </ligand>
</feature>
<feature type="binding site" evidence="6">
    <location>
        <position position="621"/>
    </location>
    <ligand>
        <name>Ca(2+)</name>
        <dbReference type="ChEBI" id="CHEBI:29108"/>
        <label>7</label>
    </ligand>
</feature>
<feature type="binding site" evidence="6">
    <location>
        <position position="626"/>
    </location>
    <ligand>
        <name>Ca(2+)</name>
        <dbReference type="ChEBI" id="CHEBI:29108"/>
        <label>7</label>
    </ligand>
</feature>
<feature type="binding site" evidence="1">
    <location>
        <position position="658"/>
    </location>
    <ligand>
        <name>Ca(2+)</name>
        <dbReference type="ChEBI" id="CHEBI:29108"/>
        <label>1</label>
    </ligand>
</feature>
<feature type="binding site" evidence="1">
    <location>
        <position position="661"/>
    </location>
    <ligand>
        <name>Ca(2+)</name>
        <dbReference type="ChEBI" id="CHEBI:29108"/>
        <label>1</label>
    </ligand>
</feature>
<feature type="modified residue" description="N-acetylalanine" evidence="2">
    <location>
        <position position="2"/>
    </location>
</feature>
<feature type="sequence conflict" description="In Ref. 1; CAA71227." evidence="8" ref="1">
    <original>A</original>
    <variation>T</variation>
    <location>
        <position position="194"/>
    </location>
</feature>
<feature type="sequence conflict" description="In Ref. 2; BAA22964." evidence="8" ref="2">
    <original>A</original>
    <variation>G</variation>
    <location>
        <position position="212"/>
    </location>
</feature>
<feature type="sequence conflict" description="In Ref. 1; CAA71227." evidence="8" ref="1">
    <original>E</original>
    <variation>G</variation>
    <location>
        <position position="402"/>
    </location>
</feature>
<keyword id="KW-0007">Acetylation</keyword>
<keyword id="KW-0106">Calcium</keyword>
<keyword id="KW-1003">Cell membrane</keyword>
<keyword id="KW-0963">Cytoplasm</keyword>
<keyword id="KW-0378">Hydrolase</keyword>
<keyword id="KW-0472">Membrane</keyword>
<keyword id="KW-0479">Metal-binding</keyword>
<keyword id="KW-0645">Protease</keyword>
<keyword id="KW-1185">Reference proteome</keyword>
<keyword id="KW-0677">Repeat</keyword>
<keyword id="KW-0788">Thiol protease</keyword>
<organism>
    <name type="scientific">Mus musculus</name>
    <name type="common">Mouse</name>
    <dbReference type="NCBI Taxonomy" id="10090"/>
    <lineage>
        <taxon>Eukaryota</taxon>
        <taxon>Metazoa</taxon>
        <taxon>Chordata</taxon>
        <taxon>Craniata</taxon>
        <taxon>Vertebrata</taxon>
        <taxon>Euteleostomi</taxon>
        <taxon>Mammalia</taxon>
        <taxon>Eutheria</taxon>
        <taxon>Euarchontoglires</taxon>
        <taxon>Glires</taxon>
        <taxon>Rodentia</taxon>
        <taxon>Myomorpha</taxon>
        <taxon>Muroidea</taxon>
        <taxon>Muridae</taxon>
        <taxon>Murinae</taxon>
        <taxon>Mus</taxon>
        <taxon>Mus</taxon>
    </lineage>
</organism>
<dbReference type="EC" id="3.4.22.53"/>
<dbReference type="EMBL" id="Y10139">
    <property type="protein sequence ID" value="CAA71227.1"/>
    <property type="molecule type" value="mRNA"/>
</dbReference>
<dbReference type="EMBL" id="D38117">
    <property type="protein sequence ID" value="BAA22964.1"/>
    <property type="molecule type" value="mRNA"/>
</dbReference>
<dbReference type="EMBL" id="AF015038">
    <property type="protein sequence ID" value="AAB94029.1"/>
    <property type="molecule type" value="mRNA"/>
</dbReference>
<dbReference type="EMBL" id="BC054726">
    <property type="protein sequence ID" value="AAH54726.1"/>
    <property type="molecule type" value="mRNA"/>
</dbReference>
<dbReference type="CCDS" id="CCDS35813.1"/>
<dbReference type="RefSeq" id="NP_033924.2">
    <property type="nucleotide sequence ID" value="NM_009794.4"/>
</dbReference>
<dbReference type="SMR" id="O08529"/>
<dbReference type="BioGRID" id="198471">
    <property type="interactions" value="28"/>
</dbReference>
<dbReference type="ComplexPortal" id="CPX-4301">
    <property type="entry name" value="M-Calpain complex"/>
</dbReference>
<dbReference type="FunCoup" id="O08529">
    <property type="interactions" value="1156"/>
</dbReference>
<dbReference type="IntAct" id="O08529">
    <property type="interactions" value="4"/>
</dbReference>
<dbReference type="MINT" id="O08529"/>
<dbReference type="STRING" id="10090.ENSMUSP00000068895"/>
<dbReference type="MEROPS" id="C02.002"/>
<dbReference type="GlyGen" id="O08529">
    <property type="glycosylation" value="1 site, 1 O-linked glycan (1 site)"/>
</dbReference>
<dbReference type="iPTMnet" id="O08529"/>
<dbReference type="PhosphoSitePlus" id="O08529"/>
<dbReference type="SwissPalm" id="O08529"/>
<dbReference type="jPOST" id="O08529"/>
<dbReference type="PaxDb" id="10090-ENSMUSP00000068895"/>
<dbReference type="PeptideAtlas" id="O08529"/>
<dbReference type="ProteomicsDB" id="273831"/>
<dbReference type="Pumba" id="O08529"/>
<dbReference type="Antibodypedia" id="20748">
    <property type="antibodies" value="447 antibodies from 39 providers"/>
</dbReference>
<dbReference type="DNASU" id="12334"/>
<dbReference type="Ensembl" id="ENSMUST00000068505.10">
    <property type="protein sequence ID" value="ENSMUSP00000068895.9"/>
    <property type="gene ID" value="ENSMUSG00000026509.16"/>
</dbReference>
<dbReference type="GeneID" id="12334"/>
<dbReference type="KEGG" id="mmu:12334"/>
<dbReference type="UCSC" id="uc007dye.2">
    <property type="organism name" value="mouse"/>
</dbReference>
<dbReference type="AGR" id="MGI:88264"/>
<dbReference type="CTD" id="824"/>
<dbReference type="MGI" id="MGI:88264">
    <property type="gene designation" value="Capn2"/>
</dbReference>
<dbReference type="VEuPathDB" id="HostDB:ENSMUSG00000026509"/>
<dbReference type="eggNOG" id="KOG0045">
    <property type="taxonomic scope" value="Eukaryota"/>
</dbReference>
<dbReference type="GeneTree" id="ENSGT00940000154784"/>
<dbReference type="HOGENOM" id="CLU_010982_0_1_1"/>
<dbReference type="InParanoid" id="O08529"/>
<dbReference type="OMA" id="XVESSGS"/>
<dbReference type="OrthoDB" id="424753at2759"/>
<dbReference type="PhylomeDB" id="O08529"/>
<dbReference type="TreeFam" id="TF314748"/>
<dbReference type="BRENDA" id="3.4.22.53">
    <property type="organism ID" value="3474"/>
</dbReference>
<dbReference type="Reactome" id="R-MMU-1474228">
    <property type="pathway name" value="Degradation of the extracellular matrix"/>
</dbReference>
<dbReference type="Reactome" id="R-MMU-9856530">
    <property type="pathway name" value="High laminar flow shear stress activates signaling by PIEZO1 and PECAM1:CDH5:KDR in endothelial cells"/>
</dbReference>
<dbReference type="Reactome" id="R-MMU-9860927">
    <property type="pathway name" value="Turbulent (oscillatory, disturbed) flow shear stress activates signaling by PIEZO1 and integrins in endothelial cells"/>
</dbReference>
<dbReference type="BioGRID-ORCS" id="12334">
    <property type="hits" value="2 hits in 77 CRISPR screens"/>
</dbReference>
<dbReference type="ChiTaRS" id="Capn2">
    <property type="organism name" value="mouse"/>
</dbReference>
<dbReference type="PRO" id="PR:O08529"/>
<dbReference type="Proteomes" id="UP000000589">
    <property type="component" value="Chromosome 1"/>
</dbReference>
<dbReference type="RNAct" id="O08529">
    <property type="molecule type" value="protein"/>
</dbReference>
<dbReference type="Bgee" id="ENSMUSG00000026509">
    <property type="expression patterns" value="Expressed in endothelial cell of lymphatic vessel and 265 other cell types or tissues"/>
</dbReference>
<dbReference type="GO" id="GO:0110158">
    <property type="term" value="C:calpain complex"/>
    <property type="evidence" value="ECO:0000266"/>
    <property type="project" value="ComplexPortal"/>
</dbReference>
<dbReference type="GO" id="GO:0000785">
    <property type="term" value="C:chromatin"/>
    <property type="evidence" value="ECO:0000314"/>
    <property type="project" value="MGI"/>
</dbReference>
<dbReference type="GO" id="GO:0005737">
    <property type="term" value="C:cytoplasm"/>
    <property type="evidence" value="ECO:0000314"/>
    <property type="project" value="MGI"/>
</dbReference>
<dbReference type="GO" id="GO:0005829">
    <property type="term" value="C:cytosol"/>
    <property type="evidence" value="ECO:0000314"/>
    <property type="project" value="MGI"/>
</dbReference>
<dbReference type="GO" id="GO:0030425">
    <property type="term" value="C:dendrite"/>
    <property type="evidence" value="ECO:0007669"/>
    <property type="project" value="Ensembl"/>
</dbReference>
<dbReference type="GO" id="GO:0009897">
    <property type="term" value="C:external side of plasma membrane"/>
    <property type="evidence" value="ECO:0007669"/>
    <property type="project" value="Ensembl"/>
</dbReference>
<dbReference type="GO" id="GO:0005925">
    <property type="term" value="C:focal adhesion"/>
    <property type="evidence" value="ECO:0007669"/>
    <property type="project" value="Ensembl"/>
</dbReference>
<dbReference type="GO" id="GO:0005794">
    <property type="term" value="C:Golgi apparatus"/>
    <property type="evidence" value="ECO:0007669"/>
    <property type="project" value="Ensembl"/>
</dbReference>
<dbReference type="GO" id="GO:0005764">
    <property type="term" value="C:lysosome"/>
    <property type="evidence" value="ECO:0000314"/>
    <property type="project" value="MGI"/>
</dbReference>
<dbReference type="GO" id="GO:0045121">
    <property type="term" value="C:membrane raft"/>
    <property type="evidence" value="ECO:0007669"/>
    <property type="project" value="Ensembl"/>
</dbReference>
<dbReference type="GO" id="GO:0043025">
    <property type="term" value="C:neuronal cell body"/>
    <property type="evidence" value="ECO:0007669"/>
    <property type="project" value="Ensembl"/>
</dbReference>
<dbReference type="GO" id="GO:0005634">
    <property type="term" value="C:nucleus"/>
    <property type="evidence" value="ECO:0000314"/>
    <property type="project" value="MGI"/>
</dbReference>
<dbReference type="GO" id="GO:0097038">
    <property type="term" value="C:perinuclear endoplasmic reticulum"/>
    <property type="evidence" value="ECO:0007669"/>
    <property type="project" value="Ensembl"/>
</dbReference>
<dbReference type="GO" id="GO:0005886">
    <property type="term" value="C:plasma membrane"/>
    <property type="evidence" value="ECO:0000250"/>
    <property type="project" value="BHF-UCL"/>
</dbReference>
<dbReference type="GO" id="GO:0098794">
    <property type="term" value="C:postsynapse"/>
    <property type="evidence" value="ECO:0000314"/>
    <property type="project" value="SynGO"/>
</dbReference>
<dbReference type="GO" id="GO:0098793">
    <property type="term" value="C:presynapse"/>
    <property type="evidence" value="ECO:0007669"/>
    <property type="project" value="GOC"/>
</dbReference>
<dbReference type="GO" id="GO:0031143">
    <property type="term" value="C:pseudopodium"/>
    <property type="evidence" value="ECO:0007669"/>
    <property type="project" value="Ensembl"/>
</dbReference>
<dbReference type="GO" id="GO:0005509">
    <property type="term" value="F:calcium ion binding"/>
    <property type="evidence" value="ECO:0007669"/>
    <property type="project" value="Ensembl"/>
</dbReference>
<dbReference type="GO" id="GO:0004198">
    <property type="term" value="F:calcium-dependent cysteine-type endopeptidase activity"/>
    <property type="evidence" value="ECO:0000314"/>
    <property type="project" value="UniProtKB"/>
</dbReference>
<dbReference type="GO" id="GO:0008092">
    <property type="term" value="F:cytoskeletal protein binding"/>
    <property type="evidence" value="ECO:0007669"/>
    <property type="project" value="Ensembl"/>
</dbReference>
<dbReference type="GO" id="GO:0019899">
    <property type="term" value="F:enzyme binding"/>
    <property type="evidence" value="ECO:0007669"/>
    <property type="project" value="Ensembl"/>
</dbReference>
<dbReference type="GO" id="GO:0008233">
    <property type="term" value="F:peptidase activity"/>
    <property type="evidence" value="ECO:0000314"/>
    <property type="project" value="MGI"/>
</dbReference>
<dbReference type="GO" id="GO:0044877">
    <property type="term" value="F:protein-containing complex binding"/>
    <property type="evidence" value="ECO:0007669"/>
    <property type="project" value="Ensembl"/>
</dbReference>
<dbReference type="GO" id="GO:0048266">
    <property type="term" value="P:behavioral response to pain"/>
    <property type="evidence" value="ECO:0007669"/>
    <property type="project" value="Ensembl"/>
</dbReference>
<dbReference type="GO" id="GO:0001824">
    <property type="term" value="P:blastocyst development"/>
    <property type="evidence" value="ECO:0000315"/>
    <property type="project" value="MGI"/>
</dbReference>
<dbReference type="GO" id="GO:0071230">
    <property type="term" value="P:cellular response to amino acid stimulus"/>
    <property type="evidence" value="ECO:0000314"/>
    <property type="project" value="UniProtKB"/>
</dbReference>
<dbReference type="GO" id="GO:0035458">
    <property type="term" value="P:cellular response to interferon-beta"/>
    <property type="evidence" value="ECO:0007669"/>
    <property type="project" value="Ensembl"/>
</dbReference>
<dbReference type="GO" id="GO:0071222">
    <property type="term" value="P:cellular response to lipopolysaccharide"/>
    <property type="evidence" value="ECO:0007669"/>
    <property type="project" value="Ensembl"/>
</dbReference>
<dbReference type="GO" id="GO:0007565">
    <property type="term" value="P:female pregnancy"/>
    <property type="evidence" value="ECO:0007669"/>
    <property type="project" value="Ensembl"/>
</dbReference>
<dbReference type="GO" id="GO:0007520">
    <property type="term" value="P:myoblast fusion"/>
    <property type="evidence" value="ECO:0000315"/>
    <property type="project" value="MGI"/>
</dbReference>
<dbReference type="GO" id="GO:0010666">
    <property type="term" value="P:positive regulation of cardiac muscle cell apoptotic process"/>
    <property type="evidence" value="ECO:0007669"/>
    <property type="project" value="Ensembl"/>
</dbReference>
<dbReference type="GO" id="GO:1901741">
    <property type="term" value="P:positive regulation of myoblast fusion"/>
    <property type="evidence" value="ECO:0007669"/>
    <property type="project" value="Ensembl"/>
</dbReference>
<dbReference type="GO" id="GO:2001247">
    <property type="term" value="P:positive regulation of phosphatidylcholine biosynthetic process"/>
    <property type="evidence" value="ECO:0007669"/>
    <property type="project" value="Ensembl"/>
</dbReference>
<dbReference type="GO" id="GO:0016540">
    <property type="term" value="P:protein autoprocessing"/>
    <property type="evidence" value="ECO:0007669"/>
    <property type="project" value="Ensembl"/>
</dbReference>
<dbReference type="GO" id="GO:0140249">
    <property type="term" value="P:protein catabolic process at postsynapse"/>
    <property type="evidence" value="ECO:0000314"/>
    <property type="project" value="SynGO"/>
</dbReference>
<dbReference type="GO" id="GO:0006508">
    <property type="term" value="P:proteolysis"/>
    <property type="evidence" value="ECO:0000314"/>
    <property type="project" value="UniProtKB"/>
</dbReference>
<dbReference type="GO" id="GO:0051603">
    <property type="term" value="P:proteolysis involved in protein catabolic process"/>
    <property type="evidence" value="ECO:0007669"/>
    <property type="project" value="Ensembl"/>
</dbReference>
<dbReference type="GO" id="GO:0032675">
    <property type="term" value="P:regulation of interleukin-6 production"/>
    <property type="evidence" value="ECO:0007669"/>
    <property type="project" value="Ensembl"/>
</dbReference>
<dbReference type="GO" id="GO:0042542">
    <property type="term" value="P:response to hydrogen peroxide"/>
    <property type="evidence" value="ECO:0007669"/>
    <property type="project" value="Ensembl"/>
</dbReference>
<dbReference type="GO" id="GO:0001666">
    <property type="term" value="P:response to hypoxia"/>
    <property type="evidence" value="ECO:0007669"/>
    <property type="project" value="Ensembl"/>
</dbReference>
<dbReference type="GO" id="GO:0009612">
    <property type="term" value="P:response to mechanical stimulus"/>
    <property type="evidence" value="ECO:0007669"/>
    <property type="project" value="Ensembl"/>
</dbReference>
<dbReference type="GO" id="GO:0048488">
    <property type="term" value="P:synaptic vesicle endocytosis"/>
    <property type="evidence" value="ECO:0000314"/>
    <property type="project" value="SynGO"/>
</dbReference>
<dbReference type="CDD" id="cd00214">
    <property type="entry name" value="Calpain_III"/>
    <property type="match status" value="1"/>
</dbReference>
<dbReference type="CDD" id="cd00044">
    <property type="entry name" value="CysPc"/>
    <property type="match status" value="1"/>
</dbReference>
<dbReference type="CDD" id="cd16199">
    <property type="entry name" value="EFh_PEF_CAPN2"/>
    <property type="match status" value="1"/>
</dbReference>
<dbReference type="FunFam" id="2.60.120.380:FF:000001">
    <property type="entry name" value="Calpain-1 catalytic subunit"/>
    <property type="match status" value="1"/>
</dbReference>
<dbReference type="FunFam" id="3.90.70.10:FF:000001">
    <property type="entry name" value="Calpain-1 catalytic subunit"/>
    <property type="match status" value="1"/>
</dbReference>
<dbReference type="FunFam" id="1.10.238.10:FF:000099">
    <property type="entry name" value="calpain-2 catalytic subunit"/>
    <property type="match status" value="1"/>
</dbReference>
<dbReference type="Gene3D" id="2.60.120.380">
    <property type="match status" value="1"/>
</dbReference>
<dbReference type="Gene3D" id="3.90.70.10">
    <property type="entry name" value="Cysteine proteinases"/>
    <property type="match status" value="1"/>
</dbReference>
<dbReference type="Gene3D" id="1.10.238.10">
    <property type="entry name" value="EF-hand"/>
    <property type="match status" value="1"/>
</dbReference>
<dbReference type="InterPro" id="IPR033883">
    <property type="entry name" value="C2_III"/>
</dbReference>
<dbReference type="InterPro" id="IPR022684">
    <property type="entry name" value="Calpain_cysteine_protease"/>
</dbReference>
<dbReference type="InterPro" id="IPR022682">
    <property type="entry name" value="Calpain_domain_III"/>
</dbReference>
<dbReference type="InterPro" id="IPR022683">
    <property type="entry name" value="Calpain_III"/>
</dbReference>
<dbReference type="InterPro" id="IPR036213">
    <property type="entry name" value="Calpain_III_sf"/>
</dbReference>
<dbReference type="InterPro" id="IPR011992">
    <property type="entry name" value="EF-hand-dom_pair"/>
</dbReference>
<dbReference type="InterPro" id="IPR018247">
    <property type="entry name" value="EF_Hand_1_Ca_BS"/>
</dbReference>
<dbReference type="InterPro" id="IPR002048">
    <property type="entry name" value="EF_hand_dom"/>
</dbReference>
<dbReference type="InterPro" id="IPR042736">
    <property type="entry name" value="EFh_PEF_CAPN2"/>
</dbReference>
<dbReference type="InterPro" id="IPR038765">
    <property type="entry name" value="Papain-like_cys_pep_sf"/>
</dbReference>
<dbReference type="InterPro" id="IPR000169">
    <property type="entry name" value="Pept_cys_AS"/>
</dbReference>
<dbReference type="InterPro" id="IPR001300">
    <property type="entry name" value="Peptidase_C2_calpain_cat"/>
</dbReference>
<dbReference type="PANTHER" id="PTHR10183">
    <property type="entry name" value="CALPAIN"/>
    <property type="match status" value="1"/>
</dbReference>
<dbReference type="PANTHER" id="PTHR10183:SF268">
    <property type="entry name" value="CALPAIN-2 CATALYTIC SUBUNIT"/>
    <property type="match status" value="1"/>
</dbReference>
<dbReference type="Pfam" id="PF01067">
    <property type="entry name" value="Calpain_III"/>
    <property type="match status" value="1"/>
</dbReference>
<dbReference type="Pfam" id="PF13833">
    <property type="entry name" value="EF-hand_8"/>
    <property type="match status" value="1"/>
</dbReference>
<dbReference type="Pfam" id="PF00648">
    <property type="entry name" value="Peptidase_C2"/>
    <property type="match status" value="1"/>
</dbReference>
<dbReference type="PRINTS" id="PR00704">
    <property type="entry name" value="CALPAIN"/>
</dbReference>
<dbReference type="SMART" id="SM00720">
    <property type="entry name" value="calpain_III"/>
    <property type="match status" value="1"/>
</dbReference>
<dbReference type="SMART" id="SM00230">
    <property type="entry name" value="CysPc"/>
    <property type="match status" value="1"/>
</dbReference>
<dbReference type="SUPFAM" id="SSF49758">
    <property type="entry name" value="Calpain large subunit, middle domain (domain III)"/>
    <property type="match status" value="1"/>
</dbReference>
<dbReference type="SUPFAM" id="SSF54001">
    <property type="entry name" value="Cysteine proteinases"/>
    <property type="match status" value="1"/>
</dbReference>
<dbReference type="SUPFAM" id="SSF47473">
    <property type="entry name" value="EF-hand"/>
    <property type="match status" value="1"/>
</dbReference>
<dbReference type="PROSITE" id="PS50203">
    <property type="entry name" value="CALPAIN_CAT"/>
    <property type="match status" value="1"/>
</dbReference>
<dbReference type="PROSITE" id="PS00018">
    <property type="entry name" value="EF_HAND_1"/>
    <property type="match status" value="2"/>
</dbReference>
<dbReference type="PROSITE" id="PS50222">
    <property type="entry name" value="EF_HAND_2"/>
    <property type="match status" value="2"/>
</dbReference>
<dbReference type="PROSITE" id="PS00139">
    <property type="entry name" value="THIOL_PROTEASE_CYS"/>
    <property type="match status" value="1"/>
</dbReference>
<name>CAN2_MOUSE</name>